<accession>Q7QCW2</accession>
<organism>
    <name type="scientific">Anopheles gambiae</name>
    <name type="common">African malaria mosquito</name>
    <dbReference type="NCBI Taxonomy" id="7165"/>
    <lineage>
        <taxon>Eukaryota</taxon>
        <taxon>Metazoa</taxon>
        <taxon>Ecdysozoa</taxon>
        <taxon>Arthropoda</taxon>
        <taxon>Hexapoda</taxon>
        <taxon>Insecta</taxon>
        <taxon>Pterygota</taxon>
        <taxon>Neoptera</taxon>
        <taxon>Endopterygota</taxon>
        <taxon>Diptera</taxon>
        <taxon>Nematocera</taxon>
        <taxon>Culicoidea</taxon>
        <taxon>Culicidae</taxon>
        <taxon>Anophelinae</taxon>
        <taxon>Anopheles</taxon>
    </lineage>
</organism>
<comment type="function">
    <text evidence="1">Probable ATP-binding RNA helicase which plays a central role during gametogenesis by repressing transposable elements and preventing their mobilization, which is essential for the germline integrity. Acts via the piRNA metabolic process, which mediates the repression of transposable elements during meiosis by forming complexes composed of piRNAs and Piwi proteins and govern the methylation and subsequent repression of transposons (By similarity).</text>
</comment>
<comment type="catalytic activity">
    <reaction>
        <text>ATP + H2O = ADP + phosphate + H(+)</text>
        <dbReference type="Rhea" id="RHEA:13065"/>
        <dbReference type="ChEBI" id="CHEBI:15377"/>
        <dbReference type="ChEBI" id="CHEBI:15378"/>
        <dbReference type="ChEBI" id="CHEBI:30616"/>
        <dbReference type="ChEBI" id="CHEBI:43474"/>
        <dbReference type="ChEBI" id="CHEBI:456216"/>
        <dbReference type="EC" id="3.6.4.13"/>
    </reaction>
</comment>
<comment type="subcellular location">
    <subcellularLocation>
        <location evidence="1">Cytoplasm</location>
    </subcellularLocation>
    <text evidence="1">Component of the nuage, also named P granule, a germ-cell-specific organelle required to repress transposon during meiosis.</text>
</comment>
<comment type="similarity">
    <text evidence="4">Belongs to the DEAD box helicase family. DEAH subfamily.</text>
</comment>
<feature type="chain" id="PRO_0000391911" description="Probable ATP-dependent RNA helicase spindle-E">
    <location>
        <begin position="1"/>
        <end position="1463"/>
    </location>
</feature>
<feature type="domain" description="Helicase ATP-binding" evidence="2">
    <location>
        <begin position="131"/>
        <end position="296"/>
    </location>
</feature>
<feature type="domain" description="Helicase C-terminal" evidence="3">
    <location>
        <begin position="348"/>
        <end position="531"/>
    </location>
</feature>
<feature type="domain" description="Tudor">
    <location>
        <begin position="951"/>
        <end position="1016"/>
    </location>
</feature>
<feature type="short sequence motif" description="DEAH box">
    <location>
        <begin position="243"/>
        <end position="246"/>
    </location>
</feature>
<feature type="binding site" evidence="2">
    <location>
        <begin position="144"/>
        <end position="151"/>
    </location>
    <ligand>
        <name>ATP</name>
        <dbReference type="ChEBI" id="CHEBI:30616"/>
    </ligand>
</feature>
<reference key="1">
    <citation type="journal article" date="2002" name="Science">
        <title>The genome sequence of the malaria mosquito Anopheles gambiae.</title>
        <authorList>
            <person name="Holt R.A."/>
            <person name="Subramanian G.M."/>
            <person name="Halpern A."/>
            <person name="Sutton G.G."/>
            <person name="Charlab R."/>
            <person name="Nusskern D.R."/>
            <person name="Wincker P."/>
            <person name="Clark A.G."/>
            <person name="Ribeiro J.M.C."/>
            <person name="Wides R."/>
            <person name="Salzberg S.L."/>
            <person name="Loftus B.J."/>
            <person name="Yandell M.D."/>
            <person name="Majoros W.H."/>
            <person name="Rusch D.B."/>
            <person name="Lai Z."/>
            <person name="Kraft C.L."/>
            <person name="Abril J.F."/>
            <person name="Anthouard V."/>
            <person name="Arensburger P."/>
            <person name="Atkinson P.W."/>
            <person name="Baden H."/>
            <person name="de Berardinis V."/>
            <person name="Baldwin D."/>
            <person name="Benes V."/>
            <person name="Biedler J."/>
            <person name="Blass C."/>
            <person name="Bolanos R."/>
            <person name="Boscus D."/>
            <person name="Barnstead M."/>
            <person name="Cai S."/>
            <person name="Center A."/>
            <person name="Chaturverdi K."/>
            <person name="Christophides G.K."/>
            <person name="Chrystal M.A.M."/>
            <person name="Clamp M."/>
            <person name="Cravchik A."/>
            <person name="Curwen V."/>
            <person name="Dana A."/>
            <person name="Delcher A."/>
            <person name="Dew I."/>
            <person name="Evans C.A."/>
            <person name="Flanigan M."/>
            <person name="Grundschober-Freimoser A."/>
            <person name="Friedli L."/>
            <person name="Gu Z."/>
            <person name="Guan P."/>
            <person name="Guigo R."/>
            <person name="Hillenmeyer M.E."/>
            <person name="Hladun S.L."/>
            <person name="Hogan J.R."/>
            <person name="Hong Y.S."/>
            <person name="Hoover J."/>
            <person name="Jaillon O."/>
            <person name="Ke Z."/>
            <person name="Kodira C.D."/>
            <person name="Kokoza E."/>
            <person name="Koutsos A."/>
            <person name="Letunic I."/>
            <person name="Levitsky A.A."/>
            <person name="Liang Y."/>
            <person name="Lin J.-J."/>
            <person name="Lobo N.F."/>
            <person name="Lopez J.R."/>
            <person name="Malek J.A."/>
            <person name="McIntosh T.C."/>
            <person name="Meister S."/>
            <person name="Miller J.R."/>
            <person name="Mobarry C."/>
            <person name="Mongin E."/>
            <person name="Murphy S.D."/>
            <person name="O'Brochta D.A."/>
            <person name="Pfannkoch C."/>
            <person name="Qi R."/>
            <person name="Regier M.A."/>
            <person name="Remington K."/>
            <person name="Shao H."/>
            <person name="Sharakhova M.V."/>
            <person name="Sitter C.D."/>
            <person name="Shetty J."/>
            <person name="Smith T.J."/>
            <person name="Strong R."/>
            <person name="Sun J."/>
            <person name="Thomasova D."/>
            <person name="Ton L.Q."/>
            <person name="Topalis P."/>
            <person name="Tu Z.J."/>
            <person name="Unger M.F."/>
            <person name="Walenz B."/>
            <person name="Wang A.H."/>
            <person name="Wang J."/>
            <person name="Wang M."/>
            <person name="Wang X."/>
            <person name="Woodford K.J."/>
            <person name="Wortman J.R."/>
            <person name="Wu M."/>
            <person name="Yao A."/>
            <person name="Zdobnov E.M."/>
            <person name="Zhang H."/>
            <person name="Zhao Q."/>
            <person name="Zhao S."/>
            <person name="Zhu S.C."/>
            <person name="Zhimulev I."/>
            <person name="Coluzzi M."/>
            <person name="della Torre A."/>
            <person name="Roth C.W."/>
            <person name="Louis C."/>
            <person name="Kalush F."/>
            <person name="Mural R.J."/>
            <person name="Myers E.W."/>
            <person name="Adams M.D."/>
            <person name="Smith H.O."/>
            <person name="Broder S."/>
            <person name="Gardner M.J."/>
            <person name="Fraser C.M."/>
            <person name="Birney E."/>
            <person name="Bork P."/>
            <person name="Brey P.T."/>
            <person name="Venter J.C."/>
            <person name="Weissenbach J."/>
            <person name="Kafatos F.C."/>
            <person name="Collins F.H."/>
            <person name="Hoffman S.L."/>
        </authorList>
    </citation>
    <scope>NUCLEOTIDE SEQUENCE [LARGE SCALE GENOMIC DNA]</scope>
    <source>
        <strain>PEST</strain>
    </source>
</reference>
<dbReference type="EC" id="3.6.4.13"/>
<dbReference type="EMBL" id="AAAB01008859">
    <property type="protein sequence ID" value="EAA07697.5"/>
    <property type="molecule type" value="Genomic_DNA"/>
</dbReference>
<dbReference type="SMR" id="Q7QCW2"/>
<dbReference type="FunCoup" id="Q7QCW2">
    <property type="interactions" value="207"/>
</dbReference>
<dbReference type="STRING" id="7165.Q7QCW2"/>
<dbReference type="PaxDb" id="7165-AGAP002829-PA"/>
<dbReference type="EnsemblMetazoa" id="AGAP002829-RA">
    <property type="protein sequence ID" value="AGAP002829-PA"/>
    <property type="gene ID" value="AGAP002829"/>
</dbReference>
<dbReference type="GeneID" id="1273132"/>
<dbReference type="KEGG" id="aga:1273132"/>
<dbReference type="VEuPathDB" id="VectorBase:AGAMI1_012317"/>
<dbReference type="VEuPathDB" id="VectorBase:AGAP002829"/>
<dbReference type="eggNOG" id="KOG0920">
    <property type="taxonomic scope" value="Eukaryota"/>
</dbReference>
<dbReference type="HOGENOM" id="CLU_002601_1_0_1"/>
<dbReference type="InParanoid" id="Q7QCW2"/>
<dbReference type="OMA" id="QRSAYCS"/>
<dbReference type="PhylomeDB" id="Q7QCW2"/>
<dbReference type="Proteomes" id="UP000007062">
    <property type="component" value="Chromosome 2R"/>
</dbReference>
<dbReference type="GO" id="GO:0005737">
    <property type="term" value="C:cytoplasm"/>
    <property type="evidence" value="ECO:0000318"/>
    <property type="project" value="GO_Central"/>
</dbReference>
<dbReference type="GO" id="GO:0005634">
    <property type="term" value="C:nucleus"/>
    <property type="evidence" value="ECO:0000318"/>
    <property type="project" value="GO_Central"/>
</dbReference>
<dbReference type="GO" id="GO:0005524">
    <property type="term" value="F:ATP binding"/>
    <property type="evidence" value="ECO:0007669"/>
    <property type="project" value="UniProtKB-KW"/>
</dbReference>
<dbReference type="GO" id="GO:0016887">
    <property type="term" value="F:ATP hydrolysis activity"/>
    <property type="evidence" value="ECO:0007669"/>
    <property type="project" value="RHEA"/>
</dbReference>
<dbReference type="GO" id="GO:0004386">
    <property type="term" value="F:helicase activity"/>
    <property type="evidence" value="ECO:0000318"/>
    <property type="project" value="GO_Central"/>
</dbReference>
<dbReference type="GO" id="GO:0003723">
    <property type="term" value="F:RNA binding"/>
    <property type="evidence" value="ECO:0000318"/>
    <property type="project" value="GO_Central"/>
</dbReference>
<dbReference type="GO" id="GO:0003724">
    <property type="term" value="F:RNA helicase activity"/>
    <property type="evidence" value="ECO:0007669"/>
    <property type="project" value="UniProtKB-EC"/>
</dbReference>
<dbReference type="GO" id="GO:0030154">
    <property type="term" value="P:cell differentiation"/>
    <property type="evidence" value="ECO:0007669"/>
    <property type="project" value="UniProtKB-KW"/>
</dbReference>
<dbReference type="GO" id="GO:0051321">
    <property type="term" value="P:meiotic cell cycle"/>
    <property type="evidence" value="ECO:0007669"/>
    <property type="project" value="UniProtKB-KW"/>
</dbReference>
<dbReference type="GO" id="GO:0031047">
    <property type="term" value="P:regulatory ncRNA-mediated gene silencing"/>
    <property type="evidence" value="ECO:0007669"/>
    <property type="project" value="UniProtKB-KW"/>
</dbReference>
<dbReference type="GO" id="GO:0007283">
    <property type="term" value="P:spermatogenesis"/>
    <property type="evidence" value="ECO:0007669"/>
    <property type="project" value="UniProtKB-KW"/>
</dbReference>
<dbReference type="CDD" id="cd18791">
    <property type="entry name" value="SF2_C_RHA"/>
    <property type="match status" value="1"/>
</dbReference>
<dbReference type="FunFam" id="3.40.50.300:FF:001676">
    <property type="entry name" value="DExH-box ATP-dependent RNA helicase DExH7 chloroplastic"/>
    <property type="match status" value="1"/>
</dbReference>
<dbReference type="FunFam" id="1.20.120.1080:FF:000052">
    <property type="entry name" value="Probable ATP-dependent RNA helicase spindle-E"/>
    <property type="match status" value="1"/>
</dbReference>
<dbReference type="Gene3D" id="1.20.120.1080">
    <property type="match status" value="1"/>
</dbReference>
<dbReference type="Gene3D" id="2.30.30.140">
    <property type="match status" value="1"/>
</dbReference>
<dbReference type="Gene3D" id="2.40.50.90">
    <property type="match status" value="1"/>
</dbReference>
<dbReference type="Gene3D" id="3.40.50.300">
    <property type="entry name" value="P-loop containing nucleotide triphosphate hydrolases"/>
    <property type="match status" value="2"/>
</dbReference>
<dbReference type="InterPro" id="IPR011545">
    <property type="entry name" value="DEAD/DEAH_box_helicase_dom"/>
</dbReference>
<dbReference type="InterPro" id="IPR007502">
    <property type="entry name" value="Helicase-assoc_dom"/>
</dbReference>
<dbReference type="InterPro" id="IPR014001">
    <property type="entry name" value="Helicase_ATP-bd"/>
</dbReference>
<dbReference type="InterPro" id="IPR001650">
    <property type="entry name" value="Helicase_C-like"/>
</dbReference>
<dbReference type="InterPro" id="IPR027417">
    <property type="entry name" value="P-loop_NTPase"/>
</dbReference>
<dbReference type="InterPro" id="IPR035437">
    <property type="entry name" value="SNase_OB-fold_sf"/>
</dbReference>
<dbReference type="InterPro" id="IPR002999">
    <property type="entry name" value="Tudor"/>
</dbReference>
<dbReference type="PANTHER" id="PTHR18934">
    <property type="entry name" value="ATP-DEPENDENT RNA HELICASE"/>
    <property type="match status" value="1"/>
</dbReference>
<dbReference type="PANTHER" id="PTHR18934:SF113">
    <property type="entry name" value="ATP-DEPENDENT RNA HELICASE TDRD9"/>
    <property type="match status" value="1"/>
</dbReference>
<dbReference type="Pfam" id="PF00270">
    <property type="entry name" value="DEAD"/>
    <property type="match status" value="1"/>
</dbReference>
<dbReference type="Pfam" id="PF00271">
    <property type="entry name" value="Helicase_C"/>
    <property type="match status" value="1"/>
</dbReference>
<dbReference type="Pfam" id="PF00567">
    <property type="entry name" value="TUDOR"/>
    <property type="match status" value="1"/>
</dbReference>
<dbReference type="SMART" id="SM00487">
    <property type="entry name" value="DEXDc"/>
    <property type="match status" value="1"/>
</dbReference>
<dbReference type="SMART" id="SM00847">
    <property type="entry name" value="HA2"/>
    <property type="match status" value="1"/>
</dbReference>
<dbReference type="SMART" id="SM00490">
    <property type="entry name" value="HELICc"/>
    <property type="match status" value="1"/>
</dbReference>
<dbReference type="SUPFAM" id="SSF52540">
    <property type="entry name" value="P-loop containing nucleoside triphosphate hydrolases"/>
    <property type="match status" value="1"/>
</dbReference>
<dbReference type="SUPFAM" id="SSF63748">
    <property type="entry name" value="Tudor/PWWP/MBT"/>
    <property type="match status" value="1"/>
</dbReference>
<dbReference type="PROSITE" id="PS51192">
    <property type="entry name" value="HELICASE_ATP_BIND_1"/>
    <property type="match status" value="1"/>
</dbReference>
<dbReference type="PROSITE" id="PS51194">
    <property type="entry name" value="HELICASE_CTER"/>
    <property type="match status" value="1"/>
</dbReference>
<name>SPNE_ANOGA</name>
<evidence type="ECO:0000250" key="1"/>
<evidence type="ECO:0000255" key="2">
    <source>
        <dbReference type="PROSITE-ProRule" id="PRU00541"/>
    </source>
</evidence>
<evidence type="ECO:0000255" key="3">
    <source>
        <dbReference type="PROSITE-ProRule" id="PRU00542"/>
    </source>
</evidence>
<evidence type="ECO:0000305" key="4"/>
<proteinExistence type="inferred from homology"/>
<protein>
    <recommendedName>
        <fullName>Probable ATP-dependent RNA helicase spindle-E</fullName>
        <ecNumber>3.6.4.13</ecNumber>
    </recommendedName>
</protein>
<keyword id="KW-0067">ATP-binding</keyword>
<keyword id="KW-0963">Cytoplasm</keyword>
<keyword id="KW-0217">Developmental protein</keyword>
<keyword id="KW-0221">Differentiation</keyword>
<keyword id="KW-0347">Helicase</keyword>
<keyword id="KW-0378">Hydrolase</keyword>
<keyword id="KW-0469">Meiosis</keyword>
<keyword id="KW-0547">Nucleotide-binding</keyword>
<keyword id="KW-1185">Reference proteome</keyword>
<keyword id="KW-0943">RNA-mediated gene silencing</keyword>
<keyword id="KW-0744">Spermatogenesis</keyword>
<gene>
    <name type="primary">spn-E</name>
    <name type="ORF">AGAP002829</name>
</gene>
<sequence>MEDDDVADFFDFSKPFKRTVVSGGYINGAVKPQKLNIQTLPERAHQGTEYAEKFCREEEARLMEGWVDETLNKSTASRLEQVDDMSSVMEEDTQHLQRVRAKELMEPLFSRYNFTVTPNRLTIHQSKQDILKAIRENPVVVLQGMTGCGKTTQVPQYLLEDAYNRKEWCNIVVTQPRKIAASSIARRVAEERNCALGSLVGFKVGLKEMVSEDTRLTYVTTGVLLNKLITSKSISSYTHIILDEVHEREVDMDFLLIIVRRLLATMRNTKIILMSATIESSEFAQYFKIPGPNSLFAPQLAVSNVTQHDVSVYYLEDLEKLRVDFTIKYEQPDVHEKMYFLAAKVAVVCDRFIDEFESASTIDYKPSIIMFLPGINEIERMAEVLRNFLGDSNVNSQEQTKFTILKLHSMLPSEEQALVFTKPSPGYRKVILSTNIAESSITIPDVKFVIDFCLHRVLVADTLNNFTTLRTQWASRNNCIQRAGRCGRVMNGRVYRLVNKHFFEHGMAQSIEPEMVRCPLSNVVLKTKLLDMGPPHTILALAMSPPNLSDVSNTVLQLKELGALLRTAKGVYDLQDGDITYLGNIMSTLPLDIHLAKLVVLGYVFSVLEEAIVIAAGMNVKNIFCQLRTIEALRVKRHFANGSASDGIAILNAYNWWRSIREQGTGGDTTDWCNRYMLDRKSLIEMAELVQEITMRLKTANIRVVSGANNARWTDRERTVVLKVVMAGAFYPNYFIPTCVTDRELSDKMVYTEIGGRDPFSTVFFCGFDHSNYIGPLYRNEIRALLTERKPTSEKHQVKVEFERSTNKIFVQFQYPPDQQSGKSLYEERNSADRVHPGVYEAIKLRQLRHNQSELLVMHHNDAVAYATEHRLGVWRNHEWHPRSVEIPNAHLSVEPPIHWNRVTATVTHVEHPNKFYLRPHDEKNDNIYHDIMEKLNGCDAVLRAFPEGYAFKQRDIVAAPLPNMVTGKMARAKLLQQCLVRGVEHWTVFFMDFGLTAGVSVKSFRQLRGTPLDMFTKFPDRVFLASLAEVQPSAVRSPKDVWMEETIKHFRQLVHGQQFDVEVYSVVNRVTMVVLRHNPDDPIDLTVNRALINSHHAQLSEESYMSKMNHEKRKRVQFEMELDPMYKTQILNDISEQQRFLEDDDVDSLELPRDLLKVRLMLRGPYSPLEVKCSSTVFSGYRKPVIIEKESLNSVLLDTNPQNTHEKLLVAGCVNETSNSRLIARMTTMMPNIPGLPALMTLIFAPTCLVKKDPDETRVVGLLAGLGTDPRTGESMYPEHDMSLAVDIAIDDDDIADINALRYTMDSILHGGHNEQTPMFGEYSIESLMVKVKDYLIKILQRDRPIQDNRSMAHDFSWVKENPSTSTSSQKRLRSTAIDIYTKAIFPLYHNLNLRPMTADRMEFLRQHCKDLHLLTQSRVPLPKGGITCRLCNVTLESDHTLRIHFYSKLHCDLELKINYRR</sequence>